<gene>
    <name type="ordered locus">OE_1462R</name>
</gene>
<accession>B0R328</accession>
<proteinExistence type="inferred from homology"/>
<protein>
    <recommendedName>
        <fullName evidence="1">Nicotinamide-nucleotide adenylyltransferase</fullName>
        <ecNumber evidence="1">2.7.7.1</ecNumber>
    </recommendedName>
    <alternativeName>
        <fullName evidence="1">NAD(+) diphosphorylase</fullName>
    </alternativeName>
    <alternativeName>
        <fullName evidence="1">NAD(+) pyrophosphorylase</fullName>
    </alternativeName>
    <alternativeName>
        <fullName evidence="1">NMN adenylyltransferase</fullName>
    </alternativeName>
</protein>
<feature type="chain" id="PRO_1000100754" description="Nicotinamide-nucleotide adenylyltransferase">
    <location>
        <begin position="1"/>
        <end position="177"/>
    </location>
</feature>
<keyword id="KW-0067">ATP-binding</keyword>
<keyword id="KW-0963">Cytoplasm</keyword>
<keyword id="KW-0520">NAD</keyword>
<keyword id="KW-0547">Nucleotide-binding</keyword>
<keyword id="KW-0548">Nucleotidyltransferase</keyword>
<keyword id="KW-0662">Pyridine nucleotide biosynthesis</keyword>
<keyword id="KW-0808">Transferase</keyword>
<organism>
    <name type="scientific">Halobacterium salinarum (strain ATCC 29341 / DSM 671 / R1)</name>
    <dbReference type="NCBI Taxonomy" id="478009"/>
    <lineage>
        <taxon>Archaea</taxon>
        <taxon>Methanobacteriati</taxon>
        <taxon>Methanobacteriota</taxon>
        <taxon>Stenosarchaea group</taxon>
        <taxon>Halobacteria</taxon>
        <taxon>Halobacteriales</taxon>
        <taxon>Halobacteriaceae</taxon>
        <taxon>Halobacterium</taxon>
        <taxon>Halobacterium salinarum NRC-34001</taxon>
    </lineage>
</organism>
<reference key="1">
    <citation type="journal article" date="2008" name="Genomics">
        <title>Evolution in the laboratory: the genome of Halobacterium salinarum strain R1 compared to that of strain NRC-1.</title>
        <authorList>
            <person name="Pfeiffer F."/>
            <person name="Schuster S.C."/>
            <person name="Broicher A."/>
            <person name="Falb M."/>
            <person name="Palm P."/>
            <person name="Rodewald K."/>
            <person name="Ruepp A."/>
            <person name="Soppa J."/>
            <person name="Tittor J."/>
            <person name="Oesterhelt D."/>
        </authorList>
    </citation>
    <scope>NUCLEOTIDE SEQUENCE [LARGE SCALE GENOMIC DNA]</scope>
    <source>
        <strain>ATCC 29341 / DSM 671 / R1</strain>
    </source>
</reference>
<evidence type="ECO:0000255" key="1">
    <source>
        <dbReference type="HAMAP-Rule" id="MF_00243"/>
    </source>
</evidence>
<comment type="catalytic activity">
    <reaction evidence="1">
        <text>beta-nicotinamide D-ribonucleotide + ATP + H(+) = diphosphate + NAD(+)</text>
        <dbReference type="Rhea" id="RHEA:21360"/>
        <dbReference type="ChEBI" id="CHEBI:14649"/>
        <dbReference type="ChEBI" id="CHEBI:15378"/>
        <dbReference type="ChEBI" id="CHEBI:30616"/>
        <dbReference type="ChEBI" id="CHEBI:33019"/>
        <dbReference type="ChEBI" id="CHEBI:57540"/>
        <dbReference type="EC" id="2.7.7.1"/>
    </reaction>
</comment>
<comment type="pathway">
    <text evidence="1">Cofactor biosynthesis; NAD(+) biosynthesis; NAD(+) from nicotinamide D-ribonucleotide: step 1/1.</text>
</comment>
<comment type="subcellular location">
    <subcellularLocation>
        <location evidence="1">Cytoplasm</location>
    </subcellularLocation>
</comment>
<comment type="similarity">
    <text evidence="1">Belongs to the archaeal NMN adenylyltransferase family.</text>
</comment>
<dbReference type="EC" id="2.7.7.1" evidence="1"/>
<dbReference type="EMBL" id="AM774415">
    <property type="protein sequence ID" value="CAP13138.1"/>
    <property type="molecule type" value="Genomic_DNA"/>
</dbReference>
<dbReference type="RefSeq" id="WP_010902177.1">
    <property type="nucleotide sequence ID" value="NC_010364.1"/>
</dbReference>
<dbReference type="SMR" id="B0R328"/>
<dbReference type="EnsemblBacteria" id="CAP13138">
    <property type="protein sequence ID" value="CAP13138"/>
    <property type="gene ID" value="OE_1462R"/>
</dbReference>
<dbReference type="KEGG" id="hsl:OE_1462R"/>
<dbReference type="HOGENOM" id="CLU_108783_0_0_2"/>
<dbReference type="PhylomeDB" id="B0R328"/>
<dbReference type="UniPathway" id="UPA00253">
    <property type="reaction ID" value="UER00600"/>
</dbReference>
<dbReference type="Proteomes" id="UP000001321">
    <property type="component" value="Chromosome"/>
</dbReference>
<dbReference type="GO" id="GO:0005737">
    <property type="term" value="C:cytoplasm"/>
    <property type="evidence" value="ECO:0007669"/>
    <property type="project" value="UniProtKB-SubCell"/>
</dbReference>
<dbReference type="GO" id="GO:0005524">
    <property type="term" value="F:ATP binding"/>
    <property type="evidence" value="ECO:0007669"/>
    <property type="project" value="UniProtKB-KW"/>
</dbReference>
<dbReference type="GO" id="GO:0000309">
    <property type="term" value="F:nicotinamide-nucleotide adenylyltransferase activity"/>
    <property type="evidence" value="ECO:0007669"/>
    <property type="project" value="UniProtKB-UniRule"/>
</dbReference>
<dbReference type="GO" id="GO:0009435">
    <property type="term" value="P:NAD biosynthetic process"/>
    <property type="evidence" value="ECO:0007669"/>
    <property type="project" value="UniProtKB-UniRule"/>
</dbReference>
<dbReference type="CDD" id="cd02166">
    <property type="entry name" value="NMNAT_Archaea"/>
    <property type="match status" value="1"/>
</dbReference>
<dbReference type="Gene3D" id="3.40.50.620">
    <property type="entry name" value="HUPs"/>
    <property type="match status" value="1"/>
</dbReference>
<dbReference type="HAMAP" id="MF_00243">
    <property type="entry name" value="NMN_adenylyltr"/>
    <property type="match status" value="1"/>
</dbReference>
<dbReference type="InterPro" id="IPR004821">
    <property type="entry name" value="Cyt_trans-like"/>
</dbReference>
<dbReference type="InterPro" id="IPR006418">
    <property type="entry name" value="NMN_Atrans_arc"/>
</dbReference>
<dbReference type="InterPro" id="IPR014729">
    <property type="entry name" value="Rossmann-like_a/b/a_fold"/>
</dbReference>
<dbReference type="NCBIfam" id="TIGR01527">
    <property type="entry name" value="arch_NMN_Atrans"/>
    <property type="match status" value="1"/>
</dbReference>
<dbReference type="NCBIfam" id="TIGR00125">
    <property type="entry name" value="cyt_tran_rel"/>
    <property type="match status" value="1"/>
</dbReference>
<dbReference type="NCBIfam" id="NF002243">
    <property type="entry name" value="PRK01153.1"/>
    <property type="match status" value="1"/>
</dbReference>
<dbReference type="PANTHER" id="PTHR21342:SF0">
    <property type="entry name" value="BIFUNCTIONAL NMN ADENYLYLTRANSFERASE_NUDIX HYDROLASE"/>
    <property type="match status" value="1"/>
</dbReference>
<dbReference type="PANTHER" id="PTHR21342">
    <property type="entry name" value="PHOSPHOPANTETHEINE ADENYLYLTRANSFERASE"/>
    <property type="match status" value="1"/>
</dbReference>
<dbReference type="Pfam" id="PF01467">
    <property type="entry name" value="CTP_transf_like"/>
    <property type="match status" value="1"/>
</dbReference>
<dbReference type="SUPFAM" id="SSF52374">
    <property type="entry name" value="Nucleotidylyl transferase"/>
    <property type="match status" value="1"/>
</dbReference>
<sequence length="177" mass="19820">MTRGFYIGRFQPFHTGHRRVIEQIATEVDELVVGIGSAGDSHSARNPFTAGERIMMITKALVEFNLVTYAVPIEDLERNAVWVSHVRSMCPKFEVAYSNNPLVIRLFNEAAVEVRQPPMYDRDVLEGAEIRRRMADGDDWESLVPDAVADVVAEIDGVERIQHVADTDANGHDSGLR</sequence>
<name>NADM_HALS3</name>